<dbReference type="EMBL" id="CU468135">
    <property type="protein sequence ID" value="CAO98206.1"/>
    <property type="molecule type" value="Genomic_DNA"/>
</dbReference>
<dbReference type="RefSeq" id="WP_012442842.1">
    <property type="nucleotide sequence ID" value="NC_010694.1"/>
</dbReference>
<dbReference type="SMR" id="B2VK61"/>
<dbReference type="STRING" id="465817.ETA_31600"/>
<dbReference type="KEGG" id="eta:ETA_31600"/>
<dbReference type="eggNOG" id="COG0090">
    <property type="taxonomic scope" value="Bacteria"/>
</dbReference>
<dbReference type="HOGENOM" id="CLU_036235_2_1_6"/>
<dbReference type="OrthoDB" id="9778722at2"/>
<dbReference type="Proteomes" id="UP000001726">
    <property type="component" value="Chromosome"/>
</dbReference>
<dbReference type="GO" id="GO:0015934">
    <property type="term" value="C:large ribosomal subunit"/>
    <property type="evidence" value="ECO:0007669"/>
    <property type="project" value="InterPro"/>
</dbReference>
<dbReference type="GO" id="GO:0019843">
    <property type="term" value="F:rRNA binding"/>
    <property type="evidence" value="ECO:0007669"/>
    <property type="project" value="UniProtKB-UniRule"/>
</dbReference>
<dbReference type="GO" id="GO:0003735">
    <property type="term" value="F:structural constituent of ribosome"/>
    <property type="evidence" value="ECO:0007669"/>
    <property type="project" value="InterPro"/>
</dbReference>
<dbReference type="GO" id="GO:0016740">
    <property type="term" value="F:transferase activity"/>
    <property type="evidence" value="ECO:0007669"/>
    <property type="project" value="InterPro"/>
</dbReference>
<dbReference type="GO" id="GO:0002181">
    <property type="term" value="P:cytoplasmic translation"/>
    <property type="evidence" value="ECO:0007669"/>
    <property type="project" value="TreeGrafter"/>
</dbReference>
<dbReference type="FunFam" id="2.30.30.30:FF:000001">
    <property type="entry name" value="50S ribosomal protein L2"/>
    <property type="match status" value="1"/>
</dbReference>
<dbReference type="FunFam" id="2.40.50.140:FF:000003">
    <property type="entry name" value="50S ribosomal protein L2"/>
    <property type="match status" value="1"/>
</dbReference>
<dbReference type="FunFam" id="4.10.950.10:FF:000001">
    <property type="entry name" value="50S ribosomal protein L2"/>
    <property type="match status" value="1"/>
</dbReference>
<dbReference type="Gene3D" id="2.30.30.30">
    <property type="match status" value="1"/>
</dbReference>
<dbReference type="Gene3D" id="2.40.50.140">
    <property type="entry name" value="Nucleic acid-binding proteins"/>
    <property type="match status" value="1"/>
</dbReference>
<dbReference type="Gene3D" id="4.10.950.10">
    <property type="entry name" value="Ribosomal protein L2, domain 3"/>
    <property type="match status" value="1"/>
</dbReference>
<dbReference type="HAMAP" id="MF_01320_B">
    <property type="entry name" value="Ribosomal_uL2_B"/>
    <property type="match status" value="1"/>
</dbReference>
<dbReference type="InterPro" id="IPR012340">
    <property type="entry name" value="NA-bd_OB-fold"/>
</dbReference>
<dbReference type="InterPro" id="IPR014722">
    <property type="entry name" value="Rib_uL2_dom2"/>
</dbReference>
<dbReference type="InterPro" id="IPR002171">
    <property type="entry name" value="Ribosomal_uL2"/>
</dbReference>
<dbReference type="InterPro" id="IPR005880">
    <property type="entry name" value="Ribosomal_uL2_bac/org-type"/>
</dbReference>
<dbReference type="InterPro" id="IPR022669">
    <property type="entry name" value="Ribosomal_uL2_C"/>
</dbReference>
<dbReference type="InterPro" id="IPR022671">
    <property type="entry name" value="Ribosomal_uL2_CS"/>
</dbReference>
<dbReference type="InterPro" id="IPR014726">
    <property type="entry name" value="Ribosomal_uL2_dom3"/>
</dbReference>
<dbReference type="InterPro" id="IPR022666">
    <property type="entry name" value="Ribosomal_uL2_RNA-bd_dom"/>
</dbReference>
<dbReference type="InterPro" id="IPR008991">
    <property type="entry name" value="Translation_prot_SH3-like_sf"/>
</dbReference>
<dbReference type="NCBIfam" id="TIGR01171">
    <property type="entry name" value="rplB_bact"/>
    <property type="match status" value="1"/>
</dbReference>
<dbReference type="PANTHER" id="PTHR13691:SF5">
    <property type="entry name" value="LARGE RIBOSOMAL SUBUNIT PROTEIN UL2M"/>
    <property type="match status" value="1"/>
</dbReference>
<dbReference type="PANTHER" id="PTHR13691">
    <property type="entry name" value="RIBOSOMAL PROTEIN L2"/>
    <property type="match status" value="1"/>
</dbReference>
<dbReference type="Pfam" id="PF00181">
    <property type="entry name" value="Ribosomal_L2"/>
    <property type="match status" value="1"/>
</dbReference>
<dbReference type="Pfam" id="PF03947">
    <property type="entry name" value="Ribosomal_L2_C"/>
    <property type="match status" value="1"/>
</dbReference>
<dbReference type="PIRSF" id="PIRSF002158">
    <property type="entry name" value="Ribosomal_L2"/>
    <property type="match status" value="1"/>
</dbReference>
<dbReference type="SMART" id="SM01383">
    <property type="entry name" value="Ribosomal_L2"/>
    <property type="match status" value="1"/>
</dbReference>
<dbReference type="SMART" id="SM01382">
    <property type="entry name" value="Ribosomal_L2_C"/>
    <property type="match status" value="1"/>
</dbReference>
<dbReference type="SUPFAM" id="SSF50249">
    <property type="entry name" value="Nucleic acid-binding proteins"/>
    <property type="match status" value="1"/>
</dbReference>
<dbReference type="SUPFAM" id="SSF50104">
    <property type="entry name" value="Translation proteins SH3-like domain"/>
    <property type="match status" value="1"/>
</dbReference>
<dbReference type="PROSITE" id="PS00467">
    <property type="entry name" value="RIBOSOMAL_L2"/>
    <property type="match status" value="1"/>
</dbReference>
<comment type="function">
    <text evidence="1">One of the primary rRNA binding proteins. Required for association of the 30S and 50S subunits to form the 70S ribosome, for tRNA binding and peptide bond formation. It has been suggested to have peptidyltransferase activity; this is somewhat controversial. Makes several contacts with the 16S rRNA in the 70S ribosome.</text>
</comment>
<comment type="subunit">
    <text evidence="1">Part of the 50S ribosomal subunit. Forms a bridge to the 30S subunit in the 70S ribosome.</text>
</comment>
<comment type="similarity">
    <text evidence="1">Belongs to the universal ribosomal protein uL2 family.</text>
</comment>
<proteinExistence type="inferred from homology"/>
<reference key="1">
    <citation type="journal article" date="2008" name="Environ. Microbiol.">
        <title>The genome of Erwinia tasmaniensis strain Et1/99, a non-pathogenic bacterium in the genus Erwinia.</title>
        <authorList>
            <person name="Kube M."/>
            <person name="Migdoll A.M."/>
            <person name="Mueller I."/>
            <person name="Kuhl H."/>
            <person name="Beck A."/>
            <person name="Reinhardt R."/>
            <person name="Geider K."/>
        </authorList>
    </citation>
    <scope>NUCLEOTIDE SEQUENCE [LARGE SCALE GENOMIC DNA]</scope>
    <source>
        <strain>DSM 17950 / CFBP 7177 / CIP 109463 / NCPPB 4357 / Et1/99</strain>
    </source>
</reference>
<keyword id="KW-1185">Reference proteome</keyword>
<keyword id="KW-0687">Ribonucleoprotein</keyword>
<keyword id="KW-0689">Ribosomal protein</keyword>
<keyword id="KW-0694">RNA-binding</keyword>
<keyword id="KW-0699">rRNA-binding</keyword>
<gene>
    <name evidence="1" type="primary">rplB</name>
    <name type="ordered locus">ETA_31600</name>
</gene>
<accession>B2VK61</accession>
<feature type="chain" id="PRO_1000141552" description="Large ribosomal subunit protein uL2">
    <location>
        <begin position="1"/>
        <end position="273"/>
    </location>
</feature>
<feature type="region of interest" description="Disordered" evidence="2">
    <location>
        <begin position="32"/>
        <end position="53"/>
    </location>
</feature>
<feature type="region of interest" description="Disordered" evidence="2">
    <location>
        <begin position="221"/>
        <end position="273"/>
    </location>
</feature>
<feature type="compositionally biased region" description="Low complexity" evidence="2">
    <location>
        <begin position="39"/>
        <end position="48"/>
    </location>
</feature>
<protein>
    <recommendedName>
        <fullName evidence="1">Large ribosomal subunit protein uL2</fullName>
    </recommendedName>
    <alternativeName>
        <fullName evidence="3">50S ribosomal protein L2</fullName>
    </alternativeName>
</protein>
<organism>
    <name type="scientific">Erwinia tasmaniensis (strain DSM 17950 / CFBP 7177 / CIP 109463 / NCPPB 4357 / Et1/99)</name>
    <dbReference type="NCBI Taxonomy" id="465817"/>
    <lineage>
        <taxon>Bacteria</taxon>
        <taxon>Pseudomonadati</taxon>
        <taxon>Pseudomonadota</taxon>
        <taxon>Gammaproteobacteria</taxon>
        <taxon>Enterobacterales</taxon>
        <taxon>Erwiniaceae</taxon>
        <taxon>Erwinia</taxon>
    </lineage>
</organism>
<evidence type="ECO:0000255" key="1">
    <source>
        <dbReference type="HAMAP-Rule" id="MF_01320"/>
    </source>
</evidence>
<evidence type="ECO:0000256" key="2">
    <source>
        <dbReference type="SAM" id="MobiDB-lite"/>
    </source>
</evidence>
<evidence type="ECO:0000305" key="3"/>
<name>RL2_ERWT9</name>
<sequence length="273" mass="29898">MAIVKCKPTSPGRRHVVKVVNLELHKGKPFAPLVEKNSKSGGRNNNGRITTRHIGGGHKQAYRIVDFKRNKDGIPATVERLEYDPNRSANIALVLYKDGERRYILAPKGLKAGDQIQSGVDAAIKAGNTLPMRNIPVGSTVHNVEMKPGKGGQIARSAGTYVQIVAREGSYVTLRLRSGEMRKVESDCRATLGEVGNAEHMLRVLGKAGAARWRGVRPTVRGTAMNPVDHPHGGGEGRNFGKHPVSPWGLQTKGKKTRSNKRTDKFIVRRRSK</sequence>